<dbReference type="EC" id="2.3.2.27"/>
<dbReference type="EMBL" id="AY278022">
    <property type="protein sequence ID" value="AAP78943.1"/>
    <property type="molecule type" value="mRNA"/>
</dbReference>
<dbReference type="EMBL" id="AK223622">
    <property type="protein sequence ID" value="BAD97342.1"/>
    <property type="molecule type" value="mRNA"/>
</dbReference>
<dbReference type="EMBL" id="CH471126">
    <property type="protein sequence ID" value="EAW57396.1"/>
    <property type="molecule type" value="Genomic_DNA"/>
</dbReference>
<dbReference type="EMBL" id="BC005834">
    <property type="protein sequence ID" value="AAH05834.2"/>
    <property type="molecule type" value="mRNA"/>
</dbReference>
<dbReference type="EMBL" id="BC038222">
    <property type="protein sequence ID" value="AAH38222.1"/>
    <property type="molecule type" value="mRNA"/>
</dbReference>
<dbReference type="EMBL" id="BC039002">
    <property type="protein sequence ID" value="AAH39002.1"/>
    <property type="molecule type" value="mRNA"/>
</dbReference>
<dbReference type="EMBL" id="BC078181">
    <property type="protein sequence ID" value="AAH78181.1"/>
    <property type="molecule type" value="mRNA"/>
</dbReference>
<dbReference type="EMBL" id="AL080159">
    <property type="protein sequence ID" value="CAB45750.1"/>
    <property type="molecule type" value="mRNA"/>
</dbReference>
<dbReference type="CCDS" id="CCDS12678.1"/>
<dbReference type="PIR" id="T12543">
    <property type="entry name" value="T12543"/>
</dbReference>
<dbReference type="RefSeq" id="NP_056464.1">
    <property type="nucleotide sequence ID" value="NM_015649.3"/>
</dbReference>
<dbReference type="SMR" id="Q8IU81"/>
<dbReference type="BioGRID" id="117576">
    <property type="interactions" value="86"/>
</dbReference>
<dbReference type="CORUM" id="Q8IU81"/>
<dbReference type="FunCoup" id="Q8IU81">
    <property type="interactions" value="2752"/>
</dbReference>
<dbReference type="IntAct" id="Q8IU81">
    <property type="interactions" value="39"/>
</dbReference>
<dbReference type="MINT" id="Q8IU81"/>
<dbReference type="STRING" id="9606.ENSP00000307265"/>
<dbReference type="GlyCosmos" id="Q8IU81">
    <property type="glycosylation" value="3 sites, 2 glycans"/>
</dbReference>
<dbReference type="GlyGen" id="Q8IU81">
    <property type="glycosylation" value="6 sites, 2 O-linked glycans (4 sites)"/>
</dbReference>
<dbReference type="iPTMnet" id="Q8IU81"/>
<dbReference type="PhosphoSitePlus" id="Q8IU81"/>
<dbReference type="BioMuta" id="IRF2BP1"/>
<dbReference type="DMDM" id="74727955"/>
<dbReference type="jPOST" id="Q8IU81"/>
<dbReference type="MassIVE" id="Q8IU81"/>
<dbReference type="PaxDb" id="9606-ENSP00000307265"/>
<dbReference type="PeptideAtlas" id="Q8IU81"/>
<dbReference type="ProteomicsDB" id="70520"/>
<dbReference type="Pumba" id="Q8IU81"/>
<dbReference type="Antibodypedia" id="31408">
    <property type="antibodies" value="237 antibodies from 30 providers"/>
</dbReference>
<dbReference type="DNASU" id="26145"/>
<dbReference type="Ensembl" id="ENST00000302165.5">
    <property type="protein sequence ID" value="ENSP00000307265.3"/>
    <property type="gene ID" value="ENSG00000170604.5"/>
</dbReference>
<dbReference type="GeneID" id="26145"/>
<dbReference type="KEGG" id="hsa:26145"/>
<dbReference type="MANE-Select" id="ENST00000302165.5">
    <property type="protein sequence ID" value="ENSP00000307265.3"/>
    <property type="RefSeq nucleotide sequence ID" value="NM_015649.3"/>
    <property type="RefSeq protein sequence ID" value="NP_056464.1"/>
</dbReference>
<dbReference type="UCSC" id="uc002pds.2">
    <property type="organism name" value="human"/>
</dbReference>
<dbReference type="AGR" id="HGNC:21728"/>
<dbReference type="CTD" id="26145"/>
<dbReference type="DisGeNET" id="26145"/>
<dbReference type="GeneCards" id="IRF2BP1"/>
<dbReference type="HGNC" id="HGNC:21728">
    <property type="gene designation" value="IRF2BP1"/>
</dbReference>
<dbReference type="HPA" id="ENSG00000170604">
    <property type="expression patterns" value="Low tissue specificity"/>
</dbReference>
<dbReference type="MIM" id="615331">
    <property type="type" value="gene"/>
</dbReference>
<dbReference type="neXtProt" id="NX_Q8IU81"/>
<dbReference type="OpenTargets" id="ENSG00000170604"/>
<dbReference type="PharmGKB" id="PA134987893"/>
<dbReference type="VEuPathDB" id="HostDB:ENSG00000170604"/>
<dbReference type="eggNOG" id="KOG3579">
    <property type="taxonomic scope" value="Eukaryota"/>
</dbReference>
<dbReference type="GeneTree" id="ENSGT00940000162120"/>
<dbReference type="HOGENOM" id="CLU_019307_2_0_1"/>
<dbReference type="InParanoid" id="Q8IU81"/>
<dbReference type="OMA" id="MFQDCLK"/>
<dbReference type="OrthoDB" id="10065080at2759"/>
<dbReference type="PAN-GO" id="Q8IU81">
    <property type="GO annotations" value="3 GO annotations based on evolutionary models"/>
</dbReference>
<dbReference type="PhylomeDB" id="Q8IU81"/>
<dbReference type="TreeFam" id="TF317075"/>
<dbReference type="PathwayCommons" id="Q8IU81"/>
<dbReference type="SignaLink" id="Q8IU81"/>
<dbReference type="SIGNOR" id="Q8IU81"/>
<dbReference type="BioGRID-ORCS" id="26145">
    <property type="hits" value="30 hits in 1198 CRISPR screens"/>
</dbReference>
<dbReference type="GenomeRNAi" id="26145"/>
<dbReference type="Pharos" id="Q8IU81">
    <property type="development level" value="Tdark"/>
</dbReference>
<dbReference type="PRO" id="PR:Q8IU81"/>
<dbReference type="Proteomes" id="UP000005640">
    <property type="component" value="Chromosome 19"/>
</dbReference>
<dbReference type="RNAct" id="Q8IU81">
    <property type="molecule type" value="protein"/>
</dbReference>
<dbReference type="Bgee" id="ENSG00000170604">
    <property type="expression patterns" value="Expressed in olfactory bulb and 145 other cell types or tissues"/>
</dbReference>
<dbReference type="GO" id="GO:0005654">
    <property type="term" value="C:nucleoplasm"/>
    <property type="evidence" value="ECO:0000314"/>
    <property type="project" value="HPA"/>
</dbReference>
<dbReference type="GO" id="GO:0005634">
    <property type="term" value="C:nucleus"/>
    <property type="evidence" value="ECO:0000314"/>
    <property type="project" value="MGI"/>
</dbReference>
<dbReference type="GO" id="GO:0003714">
    <property type="term" value="F:transcription corepressor activity"/>
    <property type="evidence" value="ECO:0000314"/>
    <property type="project" value="MGI"/>
</dbReference>
<dbReference type="GO" id="GO:0061630">
    <property type="term" value="F:ubiquitin protein ligase activity"/>
    <property type="evidence" value="ECO:0000314"/>
    <property type="project" value="ARUK-UCL"/>
</dbReference>
<dbReference type="GO" id="GO:0008270">
    <property type="term" value="F:zinc ion binding"/>
    <property type="evidence" value="ECO:0007669"/>
    <property type="project" value="UniProtKB-KW"/>
</dbReference>
<dbReference type="GO" id="GO:0000122">
    <property type="term" value="P:negative regulation of transcription by RNA polymerase II"/>
    <property type="evidence" value="ECO:0000314"/>
    <property type="project" value="MGI"/>
</dbReference>
<dbReference type="GO" id="GO:0000209">
    <property type="term" value="P:protein polyubiquitination"/>
    <property type="evidence" value="ECO:0000314"/>
    <property type="project" value="ARUK-UCL"/>
</dbReference>
<dbReference type="GO" id="GO:0006357">
    <property type="term" value="P:regulation of transcription by RNA polymerase II"/>
    <property type="evidence" value="ECO:0000318"/>
    <property type="project" value="GO_Central"/>
</dbReference>
<dbReference type="FunFam" id="1.10.10.1580:FF:000001">
    <property type="entry name" value="interferon regulatory factor 2-binding protein 2"/>
    <property type="match status" value="1"/>
</dbReference>
<dbReference type="Gene3D" id="1.10.10.1580">
    <property type="entry name" value="Interferon regulatory factor 2-binding protein"/>
    <property type="match status" value="1"/>
</dbReference>
<dbReference type="InterPro" id="IPR044882">
    <property type="entry name" value="I2BP1/2_C3HC4-RING_sf"/>
</dbReference>
<dbReference type="InterPro" id="IPR022750">
    <property type="entry name" value="Interferon_reg_fac2-bd1_2_Znf"/>
</dbReference>
<dbReference type="PANTHER" id="PTHR10816:SF17">
    <property type="entry name" value="INTERFERON REGULATORY FACTOR 2-BINDING PROTEIN 1"/>
    <property type="match status" value="1"/>
</dbReference>
<dbReference type="PANTHER" id="PTHR10816">
    <property type="entry name" value="MYELIN TRANSCRIPTION FACTOR 1-RELATED"/>
    <property type="match status" value="1"/>
</dbReference>
<dbReference type="Pfam" id="PF11261">
    <property type="entry name" value="IRF-2BP1_2"/>
    <property type="match status" value="1"/>
</dbReference>
<dbReference type="Pfam" id="PF25457">
    <property type="entry name" value="IRF-2BP1_2_M"/>
    <property type="match status" value="1"/>
</dbReference>
<dbReference type="Pfam" id="PF25454">
    <property type="entry name" value="zf-C3HC4_IRF-2BP1_2"/>
    <property type="match status" value="1"/>
</dbReference>
<dbReference type="SUPFAM" id="SSF57850">
    <property type="entry name" value="RING/U-box"/>
    <property type="match status" value="1"/>
</dbReference>
<gene>
    <name type="primary">IRF2BP1</name>
</gene>
<name>I2BP1_HUMAN</name>
<comment type="function">
    <text evidence="3 5">Acts as a transcriptional corepressor in a IRF2-dependent manner; this repression is not mediated by histone deacetylase activities. May act as an E3 ligase towards JDP2, enhancing its polyubiquitination. Represses ATF2-dependent transcriptional activation.</text>
</comment>
<comment type="catalytic activity">
    <reaction>
        <text>S-ubiquitinyl-[E2 ubiquitin-conjugating enzyme]-L-cysteine + [acceptor protein]-L-lysine = [E2 ubiquitin-conjugating enzyme]-L-cysteine + N(6)-ubiquitinyl-[acceptor protein]-L-lysine.</text>
        <dbReference type="EC" id="2.3.2.27"/>
    </reaction>
</comment>
<comment type="subunit">
    <text evidence="3 5">Interacts with IRF2. Part of a corepressor complex containing IRF2 and IRF2BP2. Interacts with JDP2.</text>
</comment>
<comment type="interaction">
    <interactant intactId="EBI-6115514">
        <id>Q8IU81</id>
    </interactant>
    <interactant intactId="EBI-1248415">
        <id>Q8WYK2</id>
        <label>JDP2</label>
    </interactant>
    <organismsDiffer>false</organismsDiffer>
    <experiments>4</experiments>
</comment>
<comment type="subcellular location">
    <subcellularLocation>
        <location evidence="3">Nucleus</location>
    </subcellularLocation>
</comment>
<comment type="similarity">
    <text evidence="6">Belongs to the IRF2BP family.</text>
</comment>
<evidence type="ECO:0000255" key="1"/>
<evidence type="ECO:0000256" key="2">
    <source>
        <dbReference type="SAM" id="MobiDB-lite"/>
    </source>
</evidence>
<evidence type="ECO:0000269" key="3">
    <source>
    </source>
</evidence>
<evidence type="ECO:0000269" key="4">
    <source>
    </source>
</evidence>
<evidence type="ECO:0000269" key="5">
    <source>
    </source>
</evidence>
<evidence type="ECO:0000305" key="6"/>
<evidence type="ECO:0007744" key="7">
    <source>
    </source>
</evidence>
<evidence type="ECO:0007744" key="8">
    <source>
    </source>
</evidence>
<evidence type="ECO:0007744" key="9">
    <source>
    </source>
</evidence>
<evidence type="ECO:0007744" key="10">
    <source>
    </source>
</evidence>
<evidence type="ECO:0007744" key="11">
    <source>
    </source>
</evidence>
<evidence type="ECO:0007744" key="12">
    <source>
    </source>
</evidence>
<evidence type="ECO:0007744" key="13">
    <source>
    </source>
</evidence>
<evidence type="ECO:0007744" key="14">
    <source>
    </source>
</evidence>
<evidence type="ECO:0007744" key="15">
    <source>
    </source>
</evidence>
<evidence type="ECO:0007744" key="16">
    <source>
    </source>
</evidence>
<proteinExistence type="evidence at protein level"/>
<feature type="chain" id="PRO_0000328729" description="Interferon regulatory factor 2-binding protein 1">
    <location>
        <begin position="1"/>
        <end position="584"/>
    </location>
</feature>
<feature type="zinc finger region" description="RING-type; degenerate">
    <location>
        <begin position="503"/>
        <end position="550"/>
    </location>
</feature>
<feature type="region of interest" description="Disordered" evidence="2">
    <location>
        <begin position="60"/>
        <end position="127"/>
    </location>
</feature>
<feature type="region of interest" description="Disordered" evidence="2">
    <location>
        <begin position="346"/>
        <end position="420"/>
    </location>
</feature>
<feature type="region of interest" description="Disordered" evidence="2">
    <location>
        <begin position="433"/>
        <end position="495"/>
    </location>
</feature>
<feature type="region of interest" description="Cys-rich">
    <location>
        <begin position="503"/>
        <end position="550"/>
    </location>
</feature>
<feature type="coiled-coil region" evidence="1">
    <location>
        <begin position="197"/>
        <end position="217"/>
    </location>
</feature>
<feature type="compositionally biased region" description="Pro residues" evidence="2">
    <location>
        <begin position="354"/>
        <end position="369"/>
    </location>
</feature>
<feature type="compositionally biased region" description="Low complexity" evidence="2">
    <location>
        <begin position="449"/>
        <end position="463"/>
    </location>
</feature>
<feature type="modified residue" description="Phosphoserine" evidence="11 13 15">
    <location>
        <position position="66"/>
    </location>
</feature>
<feature type="modified residue" description="Phosphoserine" evidence="8 13">
    <location>
        <position position="125"/>
    </location>
</feature>
<feature type="modified residue" description="Omega-N-methylarginine" evidence="14">
    <location>
        <position position="177"/>
    </location>
</feature>
<feature type="modified residue" description="Phosphoserine" evidence="9">
    <location>
        <position position="186"/>
    </location>
</feature>
<feature type="modified residue" description="Phosphoserine" evidence="13">
    <location>
        <position position="371"/>
    </location>
</feature>
<feature type="modified residue" description="Phosphoserine" evidence="11">
    <location>
        <position position="384"/>
    </location>
</feature>
<feature type="modified residue" description="Phosphoserine" evidence="9 11 13 15">
    <location>
        <position position="421"/>
    </location>
</feature>
<feature type="modified residue" description="Phosphoserine" evidence="7 10 11 12 13 15">
    <location>
        <position position="436"/>
    </location>
</feature>
<feature type="modified residue" description="Phosphoserine" evidence="8 9 11 12 13 15">
    <location>
        <position position="453"/>
    </location>
</feature>
<feature type="modified residue" description="Phosphoserine" evidence="9">
    <location>
        <position position="457"/>
    </location>
</feature>
<feature type="cross-link" description="Glycyl lysine isopeptide (Lys-Gly) (interchain with G-Cter in SUMO2)" evidence="16">
    <location>
        <position position="227"/>
    </location>
</feature>
<feature type="cross-link" description="Glycyl lysine isopeptide (Lys-Gly) (interchain with G-Cter in SUMO2)" evidence="16">
    <location>
        <position position="438"/>
    </location>
</feature>
<feature type="sequence variant" id="VAR_042502" description="In dbSNP:rs11550349." evidence="4">
    <original>M</original>
    <variation>I</variation>
    <location>
        <position position="24"/>
    </location>
</feature>
<feature type="sequence conflict" description="In Ref. 2; BAD97342." evidence="6" ref="2">
    <original>L</original>
    <variation>P</variation>
    <location>
        <position position="80"/>
    </location>
</feature>
<feature type="sequence conflict" description="In Ref. 2; BAD97342." evidence="6" ref="2">
    <original>H</original>
    <variation>R</variation>
    <location>
        <position position="250"/>
    </location>
</feature>
<feature type="sequence conflict" description="In Ref. 4; AAH78181." evidence="6" ref="4">
    <original>R</original>
    <variation>C</variation>
    <location>
        <position position="381"/>
    </location>
</feature>
<feature type="sequence conflict" description="In Ref. 2; BAD97342." evidence="6" ref="2">
    <original>K</original>
    <variation>E</variation>
    <location>
        <position position="577"/>
    </location>
</feature>
<accession>Q8IU81</accession>
<accession>Q53EL7</accession>
<accession>Q6DC95</accession>
<accession>Q9BRZ9</accession>
<accession>Q9Y4P4</accession>
<protein>
    <recommendedName>
        <fullName>Interferon regulatory factor 2-binding protein 1</fullName>
        <shortName>IRF-2-binding protein 1</shortName>
        <shortName>IRF-2BP1</shortName>
    </recommendedName>
    <alternativeName>
        <fullName>Probable E3 ubiquitin-protein ligase IRF2BP1</fullName>
        <ecNumber>2.3.2.27</ecNumber>
    </alternativeName>
    <alternativeName>
        <fullName evidence="6">Probable RING-type E3 ubiquitin transferase IRF2BP1</fullName>
    </alternativeName>
</protein>
<keyword id="KW-0175">Coiled coil</keyword>
<keyword id="KW-1017">Isopeptide bond</keyword>
<keyword id="KW-0479">Metal-binding</keyword>
<keyword id="KW-0488">Methylation</keyword>
<keyword id="KW-0539">Nucleus</keyword>
<keyword id="KW-0597">Phosphoprotein</keyword>
<keyword id="KW-1267">Proteomics identification</keyword>
<keyword id="KW-1185">Reference proteome</keyword>
<keyword id="KW-0678">Repressor</keyword>
<keyword id="KW-0804">Transcription</keyword>
<keyword id="KW-0805">Transcription regulation</keyword>
<keyword id="KW-0808">Transferase</keyword>
<keyword id="KW-0832">Ubl conjugation</keyword>
<keyword id="KW-0833">Ubl conjugation pathway</keyword>
<keyword id="KW-0862">Zinc</keyword>
<keyword id="KW-0863">Zinc-finger</keyword>
<organism>
    <name type="scientific">Homo sapiens</name>
    <name type="common">Human</name>
    <dbReference type="NCBI Taxonomy" id="9606"/>
    <lineage>
        <taxon>Eukaryota</taxon>
        <taxon>Metazoa</taxon>
        <taxon>Chordata</taxon>
        <taxon>Craniata</taxon>
        <taxon>Vertebrata</taxon>
        <taxon>Euteleostomi</taxon>
        <taxon>Mammalia</taxon>
        <taxon>Eutheria</taxon>
        <taxon>Euarchontoglires</taxon>
        <taxon>Primates</taxon>
        <taxon>Haplorrhini</taxon>
        <taxon>Catarrhini</taxon>
        <taxon>Hominidae</taxon>
        <taxon>Homo</taxon>
    </lineage>
</organism>
<sequence>MASVQASRRQWCYLCDLPKMPWAMVWDFSEAVCRGCVNFEGADRIELLIDAARQLKRSHVLPEGRSPGPPALKHPATKDLAAAAAQGPQLPPPQAQPQPSGTGGGVSGQDRYDRATSSGRLPLPSPALEYTLGSRLANGLGREEAVAEGARRALLGSMPGLMPPGLLAAAVSGLGSRGLTLAPGLSPARPLFGSDFEKEKQQRNADCLAELNEAMRGRAEEWHGRPKAVREQLLALSACAPFNVRFKKDHGLVGRVFAFDATARPPGYEFELKLFTEYPCGSGNVYAGVLAVARQMFHDALREPGKALASSGFKYLEYERRHGSGEWRQLGELLTDGVRSFREPAPAEALPQQYPEPAPAALCGPPPRAPSRNLAPTPRRRKASPEPEGEAAGKMTTEEQQQRHWVAPGGPYSAETPGVPSPIAALKNVAEALGHSPKDPGGGGGPVRAGGASPAASSTAQPPTQHRLVARNGEAEVSPTAGAEAVSGGGSGTGATPGAPLCCTLCRERLEDTHFVQCPSVPGHKFCFPCSREFIKAQGPAGEVYCPSGDKCPLVGSSVPWAFMQGEIATILAGDIKVKKERDP</sequence>
<reference key="1">
    <citation type="journal article" date="2003" name="Nucleic Acids Res.">
        <title>Identification of novel co-repressor molecules for interferon regulatory factor-2.</title>
        <authorList>
            <person name="Childs K.S."/>
            <person name="Goodbourn S."/>
        </authorList>
    </citation>
    <scope>NUCLEOTIDE SEQUENCE [MRNA]</scope>
    <scope>FUNCTION</scope>
    <scope>INTERACTION WITH IRF2</scope>
    <scope>SUBCELLULAR LOCATION</scope>
</reference>
<reference key="2">
    <citation type="submission" date="2005-04" db="EMBL/GenBank/DDBJ databases">
        <authorList>
            <person name="Totoki Y."/>
            <person name="Toyoda A."/>
            <person name="Takeda T."/>
            <person name="Sakaki Y."/>
            <person name="Tanaka A."/>
            <person name="Yokoyama S."/>
        </authorList>
    </citation>
    <scope>NUCLEOTIDE SEQUENCE [LARGE SCALE MRNA]</scope>
    <source>
        <tissue>Brain</tissue>
    </source>
</reference>
<reference key="3">
    <citation type="submission" date="2005-07" db="EMBL/GenBank/DDBJ databases">
        <authorList>
            <person name="Mural R.J."/>
            <person name="Istrail S."/>
            <person name="Sutton G.G."/>
            <person name="Florea L."/>
            <person name="Halpern A.L."/>
            <person name="Mobarry C.M."/>
            <person name="Lippert R."/>
            <person name="Walenz B."/>
            <person name="Shatkay H."/>
            <person name="Dew I."/>
            <person name="Miller J.R."/>
            <person name="Flanigan M.J."/>
            <person name="Edwards N.J."/>
            <person name="Bolanos R."/>
            <person name="Fasulo D."/>
            <person name="Halldorsson B.V."/>
            <person name="Hannenhalli S."/>
            <person name="Turner R."/>
            <person name="Yooseph S."/>
            <person name="Lu F."/>
            <person name="Nusskern D.R."/>
            <person name="Shue B.C."/>
            <person name="Zheng X.H."/>
            <person name="Zhong F."/>
            <person name="Delcher A.L."/>
            <person name="Huson D.H."/>
            <person name="Kravitz S.A."/>
            <person name="Mouchard L."/>
            <person name="Reinert K."/>
            <person name="Remington K.A."/>
            <person name="Clark A.G."/>
            <person name="Waterman M.S."/>
            <person name="Eichler E.E."/>
            <person name="Adams M.D."/>
            <person name="Hunkapiller M.W."/>
            <person name="Myers E.W."/>
            <person name="Venter J.C."/>
        </authorList>
    </citation>
    <scope>NUCLEOTIDE SEQUENCE [LARGE SCALE GENOMIC DNA]</scope>
</reference>
<reference key="4">
    <citation type="journal article" date="2004" name="Genome Res.">
        <title>The status, quality, and expansion of the NIH full-length cDNA project: the Mammalian Gene Collection (MGC).</title>
        <authorList>
            <consortium name="The MGC Project Team"/>
        </authorList>
    </citation>
    <scope>NUCLEOTIDE SEQUENCE [LARGE SCALE MRNA]</scope>
    <scope>VARIANT ILE-24</scope>
    <source>
        <tissue>Brain</tissue>
        <tissue>Colon</tissue>
        <tissue>Lung</tissue>
        <tissue>Uterus</tissue>
    </source>
</reference>
<reference key="5">
    <citation type="journal article" date="2007" name="BMC Genomics">
        <title>The full-ORF clone resource of the German cDNA consortium.</title>
        <authorList>
            <person name="Bechtel S."/>
            <person name="Rosenfelder H."/>
            <person name="Duda A."/>
            <person name="Schmidt C.P."/>
            <person name="Ernst U."/>
            <person name="Wellenreuther R."/>
            <person name="Mehrle A."/>
            <person name="Schuster C."/>
            <person name="Bahr A."/>
            <person name="Bloecker H."/>
            <person name="Heubner D."/>
            <person name="Hoerlein A."/>
            <person name="Michel G."/>
            <person name="Wedler H."/>
            <person name="Koehrer K."/>
            <person name="Ottenwaelder B."/>
            <person name="Poustka A."/>
            <person name="Wiemann S."/>
            <person name="Schupp I."/>
        </authorList>
    </citation>
    <scope>NUCLEOTIDE SEQUENCE [LARGE SCALE MRNA] OF 224-584</scope>
    <source>
        <tissue>Testis</tissue>
    </source>
</reference>
<reference key="6">
    <citation type="journal article" date="2006" name="Cell">
        <title>Global, in vivo, and site-specific phosphorylation dynamics in signaling networks.</title>
        <authorList>
            <person name="Olsen J.V."/>
            <person name="Blagoev B."/>
            <person name="Gnad F."/>
            <person name="Macek B."/>
            <person name="Kumar C."/>
            <person name="Mortensen P."/>
            <person name="Mann M."/>
        </authorList>
    </citation>
    <scope>PHOSPHORYLATION [LARGE SCALE ANALYSIS] AT SER-436</scope>
    <scope>IDENTIFICATION BY MASS SPECTROMETRY [LARGE SCALE ANALYSIS]</scope>
    <source>
        <tissue>Cervix carcinoma</tissue>
    </source>
</reference>
<reference key="7">
    <citation type="journal article" date="2008" name="FEBS Lett.">
        <title>IRF2-binding protein-1 is a JDP2 ubiquitin ligase and an inhibitor of ATF2-dependent transcription.</title>
        <authorList>
            <person name="Kimura M."/>
        </authorList>
    </citation>
    <scope>FUNCTION AS E3 LIGASE</scope>
    <scope>INTERACTION WITH JDP2</scope>
</reference>
<reference key="8">
    <citation type="journal article" date="2008" name="J. Proteome Res.">
        <title>Combining protein-based IMAC, peptide-based IMAC, and MudPIT for efficient phosphoproteomic analysis.</title>
        <authorList>
            <person name="Cantin G.T."/>
            <person name="Yi W."/>
            <person name="Lu B."/>
            <person name="Park S.K."/>
            <person name="Xu T."/>
            <person name="Lee J.-D."/>
            <person name="Yates J.R. III"/>
        </authorList>
    </citation>
    <scope>PHOSPHORYLATION [LARGE SCALE ANALYSIS] AT SER-125 AND SER-453</scope>
    <scope>IDENTIFICATION BY MASS SPECTROMETRY [LARGE SCALE ANALYSIS]</scope>
    <source>
        <tissue>Cervix carcinoma</tissue>
    </source>
</reference>
<reference key="9">
    <citation type="journal article" date="2008" name="Proc. Natl. Acad. Sci. U.S.A.">
        <title>A quantitative atlas of mitotic phosphorylation.</title>
        <authorList>
            <person name="Dephoure N."/>
            <person name="Zhou C."/>
            <person name="Villen J."/>
            <person name="Beausoleil S.A."/>
            <person name="Bakalarski C.E."/>
            <person name="Elledge S.J."/>
            <person name="Gygi S.P."/>
        </authorList>
    </citation>
    <scope>PHOSPHORYLATION [LARGE SCALE ANALYSIS] AT SER-186; SER-421; SER-453 AND SER-457</scope>
    <scope>IDENTIFICATION BY MASS SPECTROMETRY [LARGE SCALE ANALYSIS]</scope>
    <source>
        <tissue>Cervix carcinoma</tissue>
    </source>
</reference>
<reference key="10">
    <citation type="journal article" date="2009" name="Sci. Signal.">
        <title>Quantitative phosphoproteomic analysis of T cell receptor signaling reveals system-wide modulation of protein-protein interactions.</title>
        <authorList>
            <person name="Mayya V."/>
            <person name="Lundgren D.H."/>
            <person name="Hwang S.-I."/>
            <person name="Rezaul K."/>
            <person name="Wu L."/>
            <person name="Eng J.K."/>
            <person name="Rodionov V."/>
            <person name="Han D.K."/>
        </authorList>
    </citation>
    <scope>PHOSPHORYLATION [LARGE SCALE ANALYSIS] AT SER-436</scope>
    <scope>IDENTIFICATION BY MASS SPECTROMETRY [LARGE SCALE ANALYSIS]</scope>
    <source>
        <tissue>Leukemic T-cell</tissue>
    </source>
</reference>
<reference key="11">
    <citation type="journal article" date="2010" name="Sci. Signal.">
        <title>Quantitative phosphoproteomics reveals widespread full phosphorylation site occupancy during mitosis.</title>
        <authorList>
            <person name="Olsen J.V."/>
            <person name="Vermeulen M."/>
            <person name="Santamaria A."/>
            <person name="Kumar C."/>
            <person name="Miller M.L."/>
            <person name="Jensen L.J."/>
            <person name="Gnad F."/>
            <person name="Cox J."/>
            <person name="Jensen T.S."/>
            <person name="Nigg E.A."/>
            <person name="Brunak S."/>
            <person name="Mann M."/>
        </authorList>
    </citation>
    <scope>PHOSPHORYLATION [LARGE SCALE ANALYSIS] AT SER-66; SER-384; SER-421; SER-436 AND SER-453</scope>
    <scope>IDENTIFICATION BY MASS SPECTROMETRY [LARGE SCALE ANALYSIS]</scope>
    <source>
        <tissue>Cervix carcinoma</tissue>
    </source>
</reference>
<reference key="12">
    <citation type="journal article" date="2011" name="BMC Syst. Biol.">
        <title>Initial characterization of the human central proteome.</title>
        <authorList>
            <person name="Burkard T.R."/>
            <person name="Planyavsky M."/>
            <person name="Kaupe I."/>
            <person name="Breitwieser F.P."/>
            <person name="Buerckstuemmer T."/>
            <person name="Bennett K.L."/>
            <person name="Superti-Furga G."/>
            <person name="Colinge J."/>
        </authorList>
    </citation>
    <scope>IDENTIFICATION BY MASS SPECTROMETRY [LARGE SCALE ANALYSIS]</scope>
</reference>
<reference key="13">
    <citation type="journal article" date="2011" name="Sci. Signal.">
        <title>System-wide temporal characterization of the proteome and phosphoproteome of human embryonic stem cell differentiation.</title>
        <authorList>
            <person name="Rigbolt K.T."/>
            <person name="Prokhorova T.A."/>
            <person name="Akimov V."/>
            <person name="Henningsen J."/>
            <person name="Johansen P.T."/>
            <person name="Kratchmarova I."/>
            <person name="Kassem M."/>
            <person name="Mann M."/>
            <person name="Olsen J.V."/>
            <person name="Blagoev B."/>
        </authorList>
    </citation>
    <scope>PHOSPHORYLATION [LARGE SCALE ANALYSIS] AT SER-436 AND SER-453</scope>
    <scope>IDENTIFICATION BY MASS SPECTROMETRY [LARGE SCALE ANALYSIS]</scope>
</reference>
<reference key="14">
    <citation type="journal article" date="2013" name="J. Proteome Res.">
        <title>Toward a comprehensive characterization of a human cancer cell phosphoproteome.</title>
        <authorList>
            <person name="Zhou H."/>
            <person name="Di Palma S."/>
            <person name="Preisinger C."/>
            <person name="Peng M."/>
            <person name="Polat A.N."/>
            <person name="Heck A.J."/>
            <person name="Mohammed S."/>
        </authorList>
    </citation>
    <scope>PHOSPHORYLATION [LARGE SCALE ANALYSIS] AT SER-66; SER-125; SER-371; SER-421; SER-436 AND SER-453</scope>
    <scope>IDENTIFICATION BY MASS SPECTROMETRY [LARGE SCALE ANALYSIS]</scope>
    <source>
        <tissue>Cervix carcinoma</tissue>
        <tissue>Erythroleukemia</tissue>
    </source>
</reference>
<reference key="15">
    <citation type="journal article" date="2014" name="J. Proteomics">
        <title>An enzyme assisted RP-RPLC approach for in-depth analysis of human liver phosphoproteome.</title>
        <authorList>
            <person name="Bian Y."/>
            <person name="Song C."/>
            <person name="Cheng K."/>
            <person name="Dong M."/>
            <person name="Wang F."/>
            <person name="Huang J."/>
            <person name="Sun D."/>
            <person name="Wang L."/>
            <person name="Ye M."/>
            <person name="Zou H."/>
        </authorList>
    </citation>
    <scope>PHOSPHORYLATION [LARGE SCALE ANALYSIS] AT SER-66; SER-421; SER-436 AND SER-453</scope>
    <scope>IDENTIFICATION BY MASS SPECTROMETRY [LARGE SCALE ANALYSIS]</scope>
    <source>
        <tissue>Liver</tissue>
    </source>
</reference>
<reference key="16">
    <citation type="journal article" date="2014" name="Mol. Cell. Proteomics">
        <title>Immunoaffinity enrichment and mass spectrometry analysis of protein methylation.</title>
        <authorList>
            <person name="Guo A."/>
            <person name="Gu H."/>
            <person name="Zhou J."/>
            <person name="Mulhern D."/>
            <person name="Wang Y."/>
            <person name="Lee K.A."/>
            <person name="Yang V."/>
            <person name="Aguiar M."/>
            <person name="Kornhauser J."/>
            <person name="Jia X."/>
            <person name="Ren J."/>
            <person name="Beausoleil S.A."/>
            <person name="Silva J.C."/>
            <person name="Vemulapalli V."/>
            <person name="Bedford M.T."/>
            <person name="Comb M.J."/>
        </authorList>
    </citation>
    <scope>METHYLATION [LARGE SCALE ANALYSIS] AT ARG-177</scope>
    <scope>IDENTIFICATION BY MASS SPECTROMETRY [LARGE SCALE ANALYSIS]</scope>
    <source>
        <tissue>Colon carcinoma</tissue>
    </source>
</reference>
<reference key="17">
    <citation type="journal article" date="2017" name="Nat. Struct. Mol. Biol.">
        <title>Site-specific mapping of the human SUMO proteome reveals co-modification with phosphorylation.</title>
        <authorList>
            <person name="Hendriks I.A."/>
            <person name="Lyon D."/>
            <person name="Young C."/>
            <person name="Jensen L.J."/>
            <person name="Vertegaal A.C."/>
            <person name="Nielsen M.L."/>
        </authorList>
    </citation>
    <scope>SUMOYLATION [LARGE SCALE ANALYSIS] AT LYS-227 AND LYS-438</scope>
    <scope>IDENTIFICATION BY MASS SPECTROMETRY [LARGE SCALE ANALYSIS]</scope>
</reference>